<evidence type="ECO:0000255" key="1">
    <source>
        <dbReference type="HAMAP-Rule" id="MF_00082"/>
    </source>
</evidence>
<comment type="function">
    <text evidence="1">Catalyzes the ATP-dependent phosphorylation of N-acetyl-L-glutamate.</text>
</comment>
<comment type="catalytic activity">
    <reaction evidence="1">
        <text>N-acetyl-L-glutamate + ATP = N-acetyl-L-glutamyl 5-phosphate + ADP</text>
        <dbReference type="Rhea" id="RHEA:14629"/>
        <dbReference type="ChEBI" id="CHEBI:30616"/>
        <dbReference type="ChEBI" id="CHEBI:44337"/>
        <dbReference type="ChEBI" id="CHEBI:57936"/>
        <dbReference type="ChEBI" id="CHEBI:456216"/>
        <dbReference type="EC" id="2.7.2.8"/>
    </reaction>
</comment>
<comment type="pathway">
    <text evidence="1">Amino-acid biosynthesis; L-arginine biosynthesis; N(2)-acetyl-L-ornithine from L-glutamate: step 2/4.</text>
</comment>
<comment type="subcellular location">
    <subcellularLocation>
        <location evidence="1">Cytoplasm</location>
    </subcellularLocation>
</comment>
<comment type="similarity">
    <text evidence="1">Belongs to the acetylglutamate kinase family. ArgB subfamily.</text>
</comment>
<reference key="1">
    <citation type="journal article" date="2008" name="PLoS ONE">
        <title>A recalibrated molecular clock and independent origins for the cholera pandemic clones.</title>
        <authorList>
            <person name="Feng L."/>
            <person name="Reeves P.R."/>
            <person name="Lan R."/>
            <person name="Ren Y."/>
            <person name="Gao C."/>
            <person name="Zhou Z."/>
            <person name="Ren Y."/>
            <person name="Cheng J."/>
            <person name="Wang W."/>
            <person name="Wang J."/>
            <person name="Qian W."/>
            <person name="Li D."/>
            <person name="Wang L."/>
        </authorList>
    </citation>
    <scope>NUCLEOTIDE SEQUENCE [LARGE SCALE GENOMIC DNA]</scope>
    <source>
        <strain>M66-2</strain>
    </source>
</reference>
<gene>
    <name evidence="1" type="primary">argB</name>
    <name type="ordered locus">VCM66_2563</name>
</gene>
<protein>
    <recommendedName>
        <fullName evidence="1">Acetylglutamate kinase</fullName>
        <ecNumber evidence="1">2.7.2.8</ecNumber>
    </recommendedName>
    <alternativeName>
        <fullName evidence="1">N-acetyl-L-glutamate 5-phosphotransferase</fullName>
    </alternativeName>
    <alternativeName>
        <fullName evidence="1">NAG kinase</fullName>
        <shortName evidence="1">NAGK</shortName>
    </alternativeName>
</protein>
<organism>
    <name type="scientific">Vibrio cholerae serotype O1 (strain M66-2)</name>
    <dbReference type="NCBI Taxonomy" id="579112"/>
    <lineage>
        <taxon>Bacteria</taxon>
        <taxon>Pseudomonadati</taxon>
        <taxon>Pseudomonadota</taxon>
        <taxon>Gammaproteobacteria</taxon>
        <taxon>Vibrionales</taxon>
        <taxon>Vibrionaceae</taxon>
        <taxon>Vibrio</taxon>
    </lineage>
</organism>
<name>ARGB_VIBCM</name>
<dbReference type="EC" id="2.7.2.8" evidence="1"/>
<dbReference type="EMBL" id="CP001233">
    <property type="protein sequence ID" value="ACP06859.1"/>
    <property type="molecule type" value="Genomic_DNA"/>
</dbReference>
<dbReference type="RefSeq" id="WP_001281558.1">
    <property type="nucleotide sequence ID" value="NC_012578.1"/>
</dbReference>
<dbReference type="SMR" id="C3LRV4"/>
<dbReference type="KEGG" id="vcm:VCM66_2563"/>
<dbReference type="HOGENOM" id="CLU_053680_1_1_6"/>
<dbReference type="UniPathway" id="UPA00068">
    <property type="reaction ID" value="UER00107"/>
</dbReference>
<dbReference type="Proteomes" id="UP000001217">
    <property type="component" value="Chromosome I"/>
</dbReference>
<dbReference type="GO" id="GO:0005737">
    <property type="term" value="C:cytoplasm"/>
    <property type="evidence" value="ECO:0007669"/>
    <property type="project" value="UniProtKB-SubCell"/>
</dbReference>
<dbReference type="GO" id="GO:0003991">
    <property type="term" value="F:acetylglutamate kinase activity"/>
    <property type="evidence" value="ECO:0007669"/>
    <property type="project" value="UniProtKB-UniRule"/>
</dbReference>
<dbReference type="GO" id="GO:0005524">
    <property type="term" value="F:ATP binding"/>
    <property type="evidence" value="ECO:0007669"/>
    <property type="project" value="UniProtKB-UniRule"/>
</dbReference>
<dbReference type="GO" id="GO:0042450">
    <property type="term" value="P:arginine biosynthetic process via ornithine"/>
    <property type="evidence" value="ECO:0007669"/>
    <property type="project" value="UniProtKB-UniRule"/>
</dbReference>
<dbReference type="GO" id="GO:0006526">
    <property type="term" value="P:L-arginine biosynthetic process"/>
    <property type="evidence" value="ECO:0007669"/>
    <property type="project" value="UniProtKB-UniPathway"/>
</dbReference>
<dbReference type="CDD" id="cd04249">
    <property type="entry name" value="AAK_NAGK-NC"/>
    <property type="match status" value="1"/>
</dbReference>
<dbReference type="FunFam" id="3.40.1160.10:FF:000008">
    <property type="entry name" value="Acetylglutamate kinase"/>
    <property type="match status" value="1"/>
</dbReference>
<dbReference type="Gene3D" id="3.40.1160.10">
    <property type="entry name" value="Acetylglutamate kinase-like"/>
    <property type="match status" value="1"/>
</dbReference>
<dbReference type="HAMAP" id="MF_00082">
    <property type="entry name" value="ArgB"/>
    <property type="match status" value="1"/>
</dbReference>
<dbReference type="InterPro" id="IPR036393">
    <property type="entry name" value="AceGlu_kinase-like_sf"/>
</dbReference>
<dbReference type="InterPro" id="IPR004662">
    <property type="entry name" value="AcgluKinase_fam"/>
</dbReference>
<dbReference type="InterPro" id="IPR037528">
    <property type="entry name" value="ArgB"/>
</dbReference>
<dbReference type="InterPro" id="IPR001048">
    <property type="entry name" value="Asp/Glu/Uridylate_kinase"/>
</dbReference>
<dbReference type="InterPro" id="IPR041731">
    <property type="entry name" value="NAGK-NC"/>
</dbReference>
<dbReference type="NCBIfam" id="TIGR00761">
    <property type="entry name" value="argB"/>
    <property type="match status" value="1"/>
</dbReference>
<dbReference type="PANTHER" id="PTHR23342">
    <property type="entry name" value="N-ACETYLGLUTAMATE SYNTHASE"/>
    <property type="match status" value="1"/>
</dbReference>
<dbReference type="PANTHER" id="PTHR23342:SF0">
    <property type="entry name" value="N-ACETYLGLUTAMATE SYNTHASE, MITOCHONDRIAL"/>
    <property type="match status" value="1"/>
</dbReference>
<dbReference type="Pfam" id="PF00696">
    <property type="entry name" value="AA_kinase"/>
    <property type="match status" value="1"/>
</dbReference>
<dbReference type="PIRSF" id="PIRSF000728">
    <property type="entry name" value="NAGK"/>
    <property type="match status" value="1"/>
</dbReference>
<dbReference type="SUPFAM" id="SSF53633">
    <property type="entry name" value="Carbamate kinase-like"/>
    <property type="match status" value="1"/>
</dbReference>
<sequence length="262" mass="27012">MSDLKLSPLVIKLGGAALDCAETLSKLFGAIAQYQNQAQRRIVIVHGGGYLVDDLMAKLQLKSVKKDGLRVTPYDQIPIIAGALAGTANKMLQGQAIKDGINAVGLSLADGGLCHVEELDPELGAVGKATPGDSTLLQAILATGAMPIISSIGLTAQGQMMNVNADQAAVAVAGALDAELVLLSDVSGVLDGKGHLIATLDAKQADALIAGKVITDGMIVKVKAALEAAQDLGRPIEVATWRYPEKLAKLFGGESIGTRFLP</sequence>
<proteinExistence type="inferred from homology"/>
<accession>C3LRV4</accession>
<feature type="chain" id="PRO_1000118365" description="Acetylglutamate kinase">
    <location>
        <begin position="1"/>
        <end position="262"/>
    </location>
</feature>
<feature type="binding site" evidence="1">
    <location>
        <begin position="48"/>
        <end position="49"/>
    </location>
    <ligand>
        <name>substrate</name>
    </ligand>
</feature>
<feature type="binding site" evidence="1">
    <location>
        <position position="70"/>
    </location>
    <ligand>
        <name>substrate</name>
    </ligand>
</feature>
<feature type="binding site" evidence="1">
    <location>
        <position position="162"/>
    </location>
    <ligand>
        <name>substrate</name>
    </ligand>
</feature>
<feature type="site" description="Transition state stabilizer" evidence="1">
    <location>
        <position position="12"/>
    </location>
</feature>
<feature type="site" description="Transition state stabilizer" evidence="1">
    <location>
        <position position="221"/>
    </location>
</feature>
<keyword id="KW-0028">Amino-acid biosynthesis</keyword>
<keyword id="KW-0055">Arginine biosynthesis</keyword>
<keyword id="KW-0067">ATP-binding</keyword>
<keyword id="KW-0963">Cytoplasm</keyword>
<keyword id="KW-0418">Kinase</keyword>
<keyword id="KW-0547">Nucleotide-binding</keyword>
<keyword id="KW-0808">Transferase</keyword>